<dbReference type="EMBL" id="AM180355">
    <property type="protein sequence ID" value="CAJ67731.1"/>
    <property type="molecule type" value="Genomic_DNA"/>
</dbReference>
<dbReference type="RefSeq" id="WP_003437136.1">
    <property type="nucleotide sequence ID" value="NZ_JAUPES010000038.1"/>
</dbReference>
<dbReference type="RefSeq" id="YP_001087372.1">
    <property type="nucleotide sequence ID" value="NC_009089.1"/>
</dbReference>
<dbReference type="SMR" id="Q18A92"/>
<dbReference type="EnsemblBacteria" id="CAJ67731">
    <property type="protein sequence ID" value="CAJ67731"/>
    <property type="gene ID" value="CD630_08980"/>
</dbReference>
<dbReference type="KEGG" id="cdf:CD630_08980"/>
<dbReference type="KEGG" id="pdc:CDIF630_01018"/>
<dbReference type="PATRIC" id="fig|272563.120.peg.922"/>
<dbReference type="eggNOG" id="COG4868">
    <property type="taxonomic scope" value="Bacteria"/>
</dbReference>
<dbReference type="OrthoDB" id="9803572at2"/>
<dbReference type="PhylomeDB" id="Q18A92"/>
<dbReference type="BioCyc" id="PDIF272563:G12WB-1006-MONOMER"/>
<dbReference type="Proteomes" id="UP000001978">
    <property type="component" value="Chromosome"/>
</dbReference>
<dbReference type="Gene3D" id="1.20.1570.10">
    <property type="entry name" value="dip2346 domain like"/>
    <property type="match status" value="1"/>
</dbReference>
<dbReference type="Gene3D" id="3.10.630.10">
    <property type="entry name" value="dip2346 domain like"/>
    <property type="match status" value="1"/>
</dbReference>
<dbReference type="Gene3D" id="3.40.140.40">
    <property type="entry name" value="Domain of unknown function (DUF1846), C-terminal subdomain"/>
    <property type="match status" value="1"/>
</dbReference>
<dbReference type="HAMAP" id="MF_01567">
    <property type="entry name" value="UPF0371"/>
    <property type="match status" value="1"/>
</dbReference>
<dbReference type="InterPro" id="IPR014999">
    <property type="entry name" value="DUF1846"/>
</dbReference>
<dbReference type="InterPro" id="IPR048441">
    <property type="entry name" value="DUF1846_C"/>
</dbReference>
<dbReference type="InterPro" id="IPR048496">
    <property type="entry name" value="DUF1846_N"/>
</dbReference>
<dbReference type="NCBIfam" id="NF010184">
    <property type="entry name" value="PRK13663.1"/>
    <property type="match status" value="1"/>
</dbReference>
<dbReference type="Pfam" id="PF08903">
    <property type="entry name" value="DUF1846"/>
    <property type="match status" value="1"/>
</dbReference>
<dbReference type="Pfam" id="PF20921">
    <property type="entry name" value="DUF1846_C"/>
    <property type="match status" value="1"/>
</dbReference>
<dbReference type="PIRSF" id="PIRSF033132">
    <property type="entry name" value="DUF1846"/>
    <property type="match status" value="1"/>
</dbReference>
<reference key="1">
    <citation type="journal article" date="2006" name="Nat. Genet.">
        <title>The multidrug-resistant human pathogen Clostridium difficile has a highly mobile, mosaic genome.</title>
        <authorList>
            <person name="Sebaihia M."/>
            <person name="Wren B.W."/>
            <person name="Mullany P."/>
            <person name="Fairweather N.F."/>
            <person name="Minton N."/>
            <person name="Stabler R."/>
            <person name="Thomson N.R."/>
            <person name="Roberts A.P."/>
            <person name="Cerdeno-Tarraga A.M."/>
            <person name="Wang H."/>
            <person name="Holden M.T.G."/>
            <person name="Wright A."/>
            <person name="Churcher C."/>
            <person name="Quail M.A."/>
            <person name="Baker S."/>
            <person name="Bason N."/>
            <person name="Brooks K."/>
            <person name="Chillingworth T."/>
            <person name="Cronin A."/>
            <person name="Davis P."/>
            <person name="Dowd L."/>
            <person name="Fraser A."/>
            <person name="Feltwell T."/>
            <person name="Hance Z."/>
            <person name="Holroyd S."/>
            <person name="Jagels K."/>
            <person name="Moule S."/>
            <person name="Mungall K."/>
            <person name="Price C."/>
            <person name="Rabbinowitsch E."/>
            <person name="Sharp S."/>
            <person name="Simmonds M."/>
            <person name="Stevens K."/>
            <person name="Unwin L."/>
            <person name="Whithead S."/>
            <person name="Dupuy B."/>
            <person name="Dougan G."/>
            <person name="Barrell B."/>
            <person name="Parkhill J."/>
        </authorList>
    </citation>
    <scope>NUCLEOTIDE SEQUENCE [LARGE SCALE GENOMIC DNA]</scope>
    <source>
        <strain>630</strain>
    </source>
</reference>
<protein>
    <recommendedName>
        <fullName evidence="1">UPF0371 protein CD630_08980</fullName>
    </recommendedName>
</protein>
<organism>
    <name type="scientific">Clostridioides difficile (strain 630)</name>
    <name type="common">Peptoclostridium difficile</name>
    <dbReference type="NCBI Taxonomy" id="272563"/>
    <lineage>
        <taxon>Bacteria</taxon>
        <taxon>Bacillati</taxon>
        <taxon>Bacillota</taxon>
        <taxon>Clostridia</taxon>
        <taxon>Peptostreptococcales</taxon>
        <taxon>Peptostreptococcaceae</taxon>
        <taxon>Clostridioides</taxon>
    </lineage>
</organism>
<name>Y898_CLOD6</name>
<feature type="chain" id="PRO_1000069095" description="UPF0371 protein CD630_08980">
    <location>
        <begin position="1"/>
        <end position="501"/>
    </location>
</feature>
<gene>
    <name type="ordered locus">CD630_08980</name>
</gene>
<evidence type="ECO:0000255" key="1">
    <source>
        <dbReference type="HAMAP-Rule" id="MF_01567"/>
    </source>
</evidence>
<accession>Q18A92</accession>
<proteinExistence type="inferred from homology"/>
<keyword id="KW-1185">Reference proteome</keyword>
<comment type="similarity">
    <text evidence="1">Belongs to the UPF0371 family.</text>
</comment>
<sequence>MKVGFDHKKYLEEQSKYILERVNNFDKLYLEFGGKLMGDLHAKRVLPGFDENAKIKVLQHMKEKVEVVICVYAGDIERNKIRGDFGITYDMEVLRLIDDLRGYELDVNSVVITRFEGQPATTVFINKLERRGIKVYKHYPTKGYPSDVETIVSDEGYGANEYIETTKPIVVVTAPGPNSGKLGTCLSQLYHENKRGNVVGYSKFETFPVWNVPVKHPLNIAYEAATVDLKDVNMIDSFHLETYGEMSVNYNRDLELFPVLKKIIEKITGKESIFQSPTDMGVNRVGFGIIDDEVIRKASIEEIIRRYFKTACEYKKGQVDKGAYDRMKMIMEELNLKPEDRNVVLPARNYSNKLKESADKNDTCPVVALELEDGTILTGKGSDLMNGTAAVVLNAIKHLANISDDMHLISPVILEPIINLKTKTLASRNVSLSCQEVLTALSICAVTNPTAQFAMEKLALLKGCQAHSTTILNRDDEQTFRKLGIDVTCDPEYPSQNLYYS</sequence>